<name>SYM_STRM5</name>
<accession>B4SRG1</accession>
<organism>
    <name type="scientific">Stenotrophomonas maltophilia (strain R551-3)</name>
    <dbReference type="NCBI Taxonomy" id="391008"/>
    <lineage>
        <taxon>Bacteria</taxon>
        <taxon>Pseudomonadati</taxon>
        <taxon>Pseudomonadota</taxon>
        <taxon>Gammaproteobacteria</taxon>
        <taxon>Lysobacterales</taxon>
        <taxon>Lysobacteraceae</taxon>
        <taxon>Stenotrophomonas</taxon>
        <taxon>Stenotrophomonas maltophilia group</taxon>
    </lineage>
</organism>
<reference key="1">
    <citation type="submission" date="2008-06" db="EMBL/GenBank/DDBJ databases">
        <title>Complete sequence of Stenotrophomonas maltophilia R551-3.</title>
        <authorList>
            <consortium name="US DOE Joint Genome Institute"/>
            <person name="Lucas S."/>
            <person name="Copeland A."/>
            <person name="Lapidus A."/>
            <person name="Glavina del Rio T."/>
            <person name="Dalin E."/>
            <person name="Tice H."/>
            <person name="Pitluck S."/>
            <person name="Chain P."/>
            <person name="Malfatti S."/>
            <person name="Shin M."/>
            <person name="Vergez L."/>
            <person name="Lang D."/>
            <person name="Schmutz J."/>
            <person name="Larimer F."/>
            <person name="Land M."/>
            <person name="Hauser L."/>
            <person name="Kyrpides N."/>
            <person name="Mikhailova N."/>
            <person name="Taghavi S."/>
            <person name="Monchy S."/>
            <person name="Newman L."/>
            <person name="Vangronsveld J."/>
            <person name="van der Lelie D."/>
            <person name="Richardson P."/>
        </authorList>
    </citation>
    <scope>NUCLEOTIDE SEQUENCE [LARGE SCALE GENOMIC DNA]</scope>
    <source>
        <strain>R551-3</strain>
    </source>
</reference>
<gene>
    <name evidence="1" type="primary">metG</name>
    <name type="ordered locus">Smal_2926</name>
</gene>
<feature type="chain" id="PRO_1000093735" description="Methionine--tRNA ligase">
    <location>
        <begin position="1"/>
        <end position="693"/>
    </location>
</feature>
<feature type="domain" description="tRNA-binding" evidence="1">
    <location>
        <begin position="590"/>
        <end position="693"/>
    </location>
</feature>
<feature type="region of interest" description="Disordered" evidence="2">
    <location>
        <begin position="557"/>
        <end position="576"/>
    </location>
</feature>
<feature type="short sequence motif" description="'HIGH' region">
    <location>
        <begin position="12"/>
        <end position="22"/>
    </location>
</feature>
<feature type="short sequence motif" description="'KMSKS' region">
    <location>
        <begin position="330"/>
        <end position="334"/>
    </location>
</feature>
<feature type="binding site" evidence="1">
    <location>
        <position position="143"/>
    </location>
    <ligand>
        <name>Zn(2+)</name>
        <dbReference type="ChEBI" id="CHEBI:29105"/>
    </ligand>
</feature>
<feature type="binding site" evidence="1">
    <location>
        <position position="146"/>
    </location>
    <ligand>
        <name>Zn(2+)</name>
        <dbReference type="ChEBI" id="CHEBI:29105"/>
    </ligand>
</feature>
<feature type="binding site" evidence="1">
    <location>
        <position position="156"/>
    </location>
    <ligand>
        <name>Zn(2+)</name>
        <dbReference type="ChEBI" id="CHEBI:29105"/>
    </ligand>
</feature>
<feature type="binding site" evidence="1">
    <location>
        <position position="159"/>
    </location>
    <ligand>
        <name>Zn(2+)</name>
        <dbReference type="ChEBI" id="CHEBI:29105"/>
    </ligand>
</feature>
<feature type="binding site" evidence="1">
    <location>
        <position position="333"/>
    </location>
    <ligand>
        <name>ATP</name>
        <dbReference type="ChEBI" id="CHEBI:30616"/>
    </ligand>
</feature>
<evidence type="ECO:0000255" key="1">
    <source>
        <dbReference type="HAMAP-Rule" id="MF_00098"/>
    </source>
</evidence>
<evidence type="ECO:0000256" key="2">
    <source>
        <dbReference type="SAM" id="MobiDB-lite"/>
    </source>
</evidence>
<keyword id="KW-0030">Aminoacyl-tRNA synthetase</keyword>
<keyword id="KW-0067">ATP-binding</keyword>
<keyword id="KW-0963">Cytoplasm</keyword>
<keyword id="KW-0436">Ligase</keyword>
<keyword id="KW-0479">Metal-binding</keyword>
<keyword id="KW-0547">Nucleotide-binding</keyword>
<keyword id="KW-0648">Protein biosynthesis</keyword>
<keyword id="KW-0694">RNA-binding</keyword>
<keyword id="KW-0820">tRNA-binding</keyword>
<keyword id="KW-0862">Zinc</keyword>
<comment type="function">
    <text evidence="1">Is required not only for elongation of protein synthesis but also for the initiation of all mRNA translation through initiator tRNA(fMet) aminoacylation.</text>
</comment>
<comment type="catalytic activity">
    <reaction evidence="1">
        <text>tRNA(Met) + L-methionine + ATP = L-methionyl-tRNA(Met) + AMP + diphosphate</text>
        <dbReference type="Rhea" id="RHEA:13481"/>
        <dbReference type="Rhea" id="RHEA-COMP:9667"/>
        <dbReference type="Rhea" id="RHEA-COMP:9698"/>
        <dbReference type="ChEBI" id="CHEBI:30616"/>
        <dbReference type="ChEBI" id="CHEBI:33019"/>
        <dbReference type="ChEBI" id="CHEBI:57844"/>
        <dbReference type="ChEBI" id="CHEBI:78442"/>
        <dbReference type="ChEBI" id="CHEBI:78530"/>
        <dbReference type="ChEBI" id="CHEBI:456215"/>
        <dbReference type="EC" id="6.1.1.10"/>
    </reaction>
</comment>
<comment type="cofactor">
    <cofactor evidence="1">
        <name>Zn(2+)</name>
        <dbReference type="ChEBI" id="CHEBI:29105"/>
    </cofactor>
    <text evidence="1">Binds 1 zinc ion per subunit.</text>
</comment>
<comment type="subunit">
    <text evidence="1">Homodimer.</text>
</comment>
<comment type="subcellular location">
    <subcellularLocation>
        <location evidence="1">Cytoplasm</location>
    </subcellularLocation>
</comment>
<comment type="similarity">
    <text evidence="1">Belongs to the class-I aminoacyl-tRNA synthetase family. MetG type 1 subfamily.</text>
</comment>
<dbReference type="EC" id="6.1.1.10" evidence="1"/>
<dbReference type="EMBL" id="CP001111">
    <property type="protein sequence ID" value="ACF52625.1"/>
    <property type="molecule type" value="Genomic_DNA"/>
</dbReference>
<dbReference type="RefSeq" id="WP_012511780.1">
    <property type="nucleotide sequence ID" value="NC_011071.1"/>
</dbReference>
<dbReference type="SMR" id="B4SRG1"/>
<dbReference type="STRING" id="391008.Smal_2926"/>
<dbReference type="KEGG" id="smt:Smal_2926"/>
<dbReference type="eggNOG" id="COG0073">
    <property type="taxonomic scope" value="Bacteria"/>
</dbReference>
<dbReference type="eggNOG" id="COG0143">
    <property type="taxonomic scope" value="Bacteria"/>
</dbReference>
<dbReference type="HOGENOM" id="CLU_009710_7_0_6"/>
<dbReference type="OrthoDB" id="9810191at2"/>
<dbReference type="Proteomes" id="UP000001867">
    <property type="component" value="Chromosome"/>
</dbReference>
<dbReference type="GO" id="GO:0005829">
    <property type="term" value="C:cytosol"/>
    <property type="evidence" value="ECO:0007669"/>
    <property type="project" value="TreeGrafter"/>
</dbReference>
<dbReference type="GO" id="GO:0005524">
    <property type="term" value="F:ATP binding"/>
    <property type="evidence" value="ECO:0007669"/>
    <property type="project" value="UniProtKB-UniRule"/>
</dbReference>
<dbReference type="GO" id="GO:0046872">
    <property type="term" value="F:metal ion binding"/>
    <property type="evidence" value="ECO:0007669"/>
    <property type="project" value="UniProtKB-KW"/>
</dbReference>
<dbReference type="GO" id="GO:0004825">
    <property type="term" value="F:methionine-tRNA ligase activity"/>
    <property type="evidence" value="ECO:0007669"/>
    <property type="project" value="UniProtKB-UniRule"/>
</dbReference>
<dbReference type="GO" id="GO:0000049">
    <property type="term" value="F:tRNA binding"/>
    <property type="evidence" value="ECO:0007669"/>
    <property type="project" value="UniProtKB-KW"/>
</dbReference>
<dbReference type="GO" id="GO:0006431">
    <property type="term" value="P:methionyl-tRNA aminoacylation"/>
    <property type="evidence" value="ECO:0007669"/>
    <property type="project" value="UniProtKB-UniRule"/>
</dbReference>
<dbReference type="CDD" id="cd07957">
    <property type="entry name" value="Anticodon_Ia_Met"/>
    <property type="match status" value="1"/>
</dbReference>
<dbReference type="CDD" id="cd00814">
    <property type="entry name" value="MetRS_core"/>
    <property type="match status" value="1"/>
</dbReference>
<dbReference type="CDD" id="cd02800">
    <property type="entry name" value="tRNA_bind_EcMetRS_like"/>
    <property type="match status" value="1"/>
</dbReference>
<dbReference type="FunFam" id="1.10.730.10:FF:000005">
    <property type="entry name" value="Methionine--tRNA ligase"/>
    <property type="match status" value="1"/>
</dbReference>
<dbReference type="FunFam" id="2.20.28.20:FF:000001">
    <property type="entry name" value="Methionine--tRNA ligase"/>
    <property type="match status" value="1"/>
</dbReference>
<dbReference type="FunFam" id="2.40.50.140:FF:000042">
    <property type="entry name" value="Methionine--tRNA ligase"/>
    <property type="match status" value="1"/>
</dbReference>
<dbReference type="Gene3D" id="3.40.50.620">
    <property type="entry name" value="HUPs"/>
    <property type="match status" value="1"/>
</dbReference>
<dbReference type="Gene3D" id="1.10.730.10">
    <property type="entry name" value="Isoleucyl-tRNA Synthetase, Domain 1"/>
    <property type="match status" value="1"/>
</dbReference>
<dbReference type="Gene3D" id="2.20.28.20">
    <property type="entry name" value="Methionyl-tRNA synthetase, Zn-domain"/>
    <property type="match status" value="1"/>
</dbReference>
<dbReference type="Gene3D" id="2.40.50.140">
    <property type="entry name" value="Nucleic acid-binding proteins"/>
    <property type="match status" value="1"/>
</dbReference>
<dbReference type="HAMAP" id="MF_00098">
    <property type="entry name" value="Met_tRNA_synth_type1"/>
    <property type="match status" value="1"/>
</dbReference>
<dbReference type="InterPro" id="IPR001412">
    <property type="entry name" value="aa-tRNA-synth_I_CS"/>
</dbReference>
<dbReference type="InterPro" id="IPR041872">
    <property type="entry name" value="Anticodon_Met"/>
</dbReference>
<dbReference type="InterPro" id="IPR004495">
    <property type="entry name" value="Met-tRNA-synth_bsu_C"/>
</dbReference>
<dbReference type="InterPro" id="IPR023458">
    <property type="entry name" value="Met-tRNA_ligase_1"/>
</dbReference>
<dbReference type="InterPro" id="IPR014758">
    <property type="entry name" value="Met-tRNA_synth"/>
</dbReference>
<dbReference type="InterPro" id="IPR015413">
    <property type="entry name" value="Methionyl/Leucyl_tRNA_Synth"/>
</dbReference>
<dbReference type="InterPro" id="IPR033911">
    <property type="entry name" value="MetRS_core"/>
</dbReference>
<dbReference type="InterPro" id="IPR029038">
    <property type="entry name" value="MetRS_Zn"/>
</dbReference>
<dbReference type="InterPro" id="IPR012340">
    <property type="entry name" value="NA-bd_OB-fold"/>
</dbReference>
<dbReference type="InterPro" id="IPR014729">
    <property type="entry name" value="Rossmann-like_a/b/a_fold"/>
</dbReference>
<dbReference type="InterPro" id="IPR002547">
    <property type="entry name" value="tRNA-bd_dom"/>
</dbReference>
<dbReference type="InterPro" id="IPR009080">
    <property type="entry name" value="tRNAsynth_Ia_anticodon-bd"/>
</dbReference>
<dbReference type="NCBIfam" id="TIGR00398">
    <property type="entry name" value="metG"/>
    <property type="match status" value="1"/>
</dbReference>
<dbReference type="NCBIfam" id="TIGR00399">
    <property type="entry name" value="metG_C_term"/>
    <property type="match status" value="1"/>
</dbReference>
<dbReference type="NCBIfam" id="NF001100">
    <property type="entry name" value="PRK00133.1"/>
    <property type="match status" value="1"/>
</dbReference>
<dbReference type="PANTHER" id="PTHR45765">
    <property type="entry name" value="METHIONINE--TRNA LIGASE"/>
    <property type="match status" value="1"/>
</dbReference>
<dbReference type="PANTHER" id="PTHR45765:SF1">
    <property type="entry name" value="METHIONINE--TRNA LIGASE, CYTOPLASMIC"/>
    <property type="match status" value="1"/>
</dbReference>
<dbReference type="Pfam" id="PF19303">
    <property type="entry name" value="Anticodon_3"/>
    <property type="match status" value="1"/>
</dbReference>
<dbReference type="Pfam" id="PF09334">
    <property type="entry name" value="tRNA-synt_1g"/>
    <property type="match status" value="1"/>
</dbReference>
<dbReference type="Pfam" id="PF01588">
    <property type="entry name" value="tRNA_bind"/>
    <property type="match status" value="1"/>
</dbReference>
<dbReference type="PRINTS" id="PR01041">
    <property type="entry name" value="TRNASYNTHMET"/>
</dbReference>
<dbReference type="SUPFAM" id="SSF47323">
    <property type="entry name" value="Anticodon-binding domain of a subclass of class I aminoacyl-tRNA synthetases"/>
    <property type="match status" value="1"/>
</dbReference>
<dbReference type="SUPFAM" id="SSF57770">
    <property type="entry name" value="Methionyl-tRNA synthetase (MetRS), Zn-domain"/>
    <property type="match status" value="1"/>
</dbReference>
<dbReference type="SUPFAM" id="SSF50249">
    <property type="entry name" value="Nucleic acid-binding proteins"/>
    <property type="match status" value="1"/>
</dbReference>
<dbReference type="SUPFAM" id="SSF52374">
    <property type="entry name" value="Nucleotidylyl transferase"/>
    <property type="match status" value="1"/>
</dbReference>
<dbReference type="PROSITE" id="PS00178">
    <property type="entry name" value="AA_TRNA_LIGASE_I"/>
    <property type="match status" value="1"/>
</dbReference>
<dbReference type="PROSITE" id="PS50886">
    <property type="entry name" value="TRBD"/>
    <property type="match status" value="1"/>
</dbReference>
<protein>
    <recommendedName>
        <fullName evidence="1">Methionine--tRNA ligase</fullName>
        <ecNumber evidence="1">6.1.1.10</ecNumber>
    </recommendedName>
    <alternativeName>
        <fullName evidence="1">Methionyl-tRNA synthetase</fullName>
        <shortName evidence="1">MetRS</shortName>
    </alternativeName>
</protein>
<sequence length="693" mass="75040">MTRTALVTTALPYANGPLHLGHLVGYIQADIWVRARRMSGGKAWFVCADDTHGTPIMLAAEKAGVTPETFIANIQASHERDFAAFGVAFDHYDSTNSAANKALTEQFYLKLEAAGHISRRSVAQFYDPAKGMFLPDRYVKGICPNCGSADQYGDNCEVCGATYAPTDLKEPRSVVSGATPEMRDSEHFFFEVGHFDGFLRDWLAGDVALPGVKAKLGEWLNAEGGLRAWDISRDAPYFGFEIPGQPGKYFYVWLDAPIGYLSSFQTLCSRIGEDFEAHLRAGTSTELHHFLGKDIVNFHGLFWPAVLHGTGHRAPTRLHVNGYLTVDGAKMSKSRGTFVMARTFLDAGLEPEALRYYFAAKSGGGVDDLDLNLGDFIARVNADLVGKFVNLASRCAGFISKRFDGLLAAQLPDAAQYQRFVDGLAPIREAYERNDPAAAIRLTMTLADEANRYIDDVKPWVIAKQEGADAQLQAVCSQGLNLFRVLVTALKPVLPATAAQAEAFLAAPVNDWTELAQPLLGHRITDYTPLFTRIDPKKIDAMIDASKDTLQTTAAAAPTAKNEAAKPAAPAAAKTEANNADAPATIGIDDFAKLDLRIGKVLVCEFVEGSDKLLRFELDAGELGKRQIFSGIRGSYGEPEKLVGRSVVFIANLAPRKMRFGLSEGMILSAGFDGGALALLDADSGAQPGMPVR</sequence>
<proteinExistence type="inferred from homology"/>